<organism>
    <name type="scientific">Rattus norvegicus</name>
    <name type="common">Rat</name>
    <dbReference type="NCBI Taxonomy" id="10116"/>
    <lineage>
        <taxon>Eukaryota</taxon>
        <taxon>Metazoa</taxon>
        <taxon>Chordata</taxon>
        <taxon>Craniata</taxon>
        <taxon>Vertebrata</taxon>
        <taxon>Euteleostomi</taxon>
        <taxon>Mammalia</taxon>
        <taxon>Eutheria</taxon>
        <taxon>Euarchontoglires</taxon>
        <taxon>Glires</taxon>
        <taxon>Rodentia</taxon>
        <taxon>Myomorpha</taxon>
        <taxon>Muroidea</taxon>
        <taxon>Muridae</taxon>
        <taxon>Murinae</taxon>
        <taxon>Rattus</taxon>
    </lineage>
</organism>
<accession>Q5M824</accession>
<gene>
    <name type="primary">Shc1</name>
</gene>
<feature type="chain" id="PRO_0000327222" description="SHC-transforming protein 1">
    <location>
        <begin position="1"/>
        <end position="469"/>
    </location>
</feature>
<feature type="domain" description="PID" evidence="4">
    <location>
        <begin position="46"/>
        <end position="229"/>
    </location>
</feature>
<feature type="domain" description="SH2" evidence="5">
    <location>
        <begin position="374"/>
        <end position="465"/>
    </location>
</feature>
<feature type="region of interest" description="Disordered" evidence="6">
    <location>
        <begin position="1"/>
        <end position="26"/>
    </location>
</feature>
<feature type="region of interest" description="CH1">
    <location>
        <begin position="230"/>
        <end position="373"/>
    </location>
</feature>
<feature type="region of interest" description="Disordered" evidence="6">
    <location>
        <begin position="322"/>
        <end position="344"/>
    </location>
</feature>
<feature type="modified residue" description="Phosphoserine" evidence="2">
    <location>
        <position position="29"/>
    </location>
</feature>
<feature type="modified residue" description="N6-acetyllysine" evidence="3">
    <location>
        <position position="44"/>
    </location>
</feature>
<feature type="modified residue" description="Phosphotyrosine" evidence="2">
    <location>
        <position position="239"/>
    </location>
</feature>
<feature type="modified residue" description="Phosphotyrosine" evidence="2">
    <location>
        <position position="240"/>
    </location>
</feature>
<feature type="modified residue" description="Phosphotyrosine" evidence="2">
    <location>
        <position position="313"/>
    </location>
</feature>
<feature type="modified residue" description="Phosphoserine" evidence="2">
    <location>
        <position position="339"/>
    </location>
</feature>
<protein>
    <recommendedName>
        <fullName>SHC-transforming protein 1</fullName>
    </recommendedName>
    <alternativeName>
        <fullName>Src homology 2 domain-containing-transforming protein C1</fullName>
        <shortName>SH2 domain protein C1</shortName>
    </alternativeName>
</protein>
<comment type="function">
    <text evidence="1">Signaling adapter that couples activated growth factor receptors to signaling pathways. Participates in a signaling cascade initiated by activated KIT and KITLG/SCF. Participates in signaling downstream of the angiopoietin receptor TEK/TIE2, and plays a role in the regulation of endothelial cell migration and sprouting angiogenesis (By similarity).</text>
</comment>
<comment type="subunit">
    <text evidence="2 3 7 8 10 11">Interacts with CPNE3; this interaction may mediate the binding of CPNE3 with ERBB2 (By similarity). Interacts with the NPXY motif of tyrosine-phosphorylated IGF1R and INSR in vitro via the PID domain. Once activated, binds to GRB2. Interacts with tyrosine-phosphorylated CD3T and DDR2. Interacts with the N-terminal region of APS. Interacts with phosphorylated LRP1 and IRS4. Interacts with INPP5D/SHIP1 and INPPL1/SHIP2. Interacts with ALK, GAB2, GRB7 and KIT. Interacts with PTPN6/SHP (tyrosine phosphorylated). Identified in a complex containing FGFR4, NCAM1, CDH2, PLCG1, FRS2A, SRC, SHC1, GAP43 and CTTN. Interacts with EPHB1 and GRB2; activates the MAPK/ERK cascade to regulate cell migration. Interacts with PDGFRB (tyrosine-phosphorylated). Interacts with ERBB4. Interacts with TEK/TIE2 (tyrosine-phosphorylated). Interacts with PTK2/FAK1 (By similarity). Interacts with FLT4 (tyrosine-phosphorylated). Interacts with the Trk receptors NTRK1, NTRK2 and NTRK3; in a phosphotyrosine-dependent manner. Interacts with CEACAM1; this interaction is CEACAM1-phosphorylation-dependent and mediates interaction with EGFR or INSR resulting in decrease coupling of SHC1 to the MAPK3/ERK1-MAPK1/ERK2 pathway (By similarity) (PubMed:11694516). Interacts (via PID domain) with PEAK1 (when phosphorylated) (By similarity). Found in a complex with PPP1CA, PPP1CC, SHC1 and PEAK1 (By similarity).</text>
</comment>
<comment type="subcellular location">
    <subcellularLocation>
        <location evidence="1">Cytoplasm</location>
    </subcellularLocation>
    <subcellularLocation>
        <location evidence="2">Cell junction</location>
        <location evidence="2">Focal adhesion</location>
    </subcellularLocation>
</comment>
<comment type="PTM">
    <text evidence="1 9 10">Phosphorylated by activated epidermal growth factor receptor. Phosphorylated in response to KIT signaling. Tyrosine phosphorylated in response to FLT3 signaling and by ligand-activated ALK. Tyrosine phosphorylated by TEK/TIE2 (By similarity). Tyrosine phosphorylated by ligand-activated PDGFRB (By similarity). May be tyrosine phosphorylated by activated PTK2/FAK1 (By similarity). Dephosphorylation by PTPN2 may regulate interaction with GRB2 (By similarity). Phosphorylated in response to FLT4 signaling. Tyrosine phosphorylated by activated PTK2B/PYK2.</text>
</comment>
<dbReference type="EMBL" id="BC088298">
    <property type="protein sequence ID" value="AAH88298.1"/>
    <property type="molecule type" value="mRNA"/>
</dbReference>
<dbReference type="RefSeq" id="NP_445969.2">
    <property type="nucleotide sequence ID" value="NM_053517.2"/>
</dbReference>
<dbReference type="BMRB" id="Q5M824"/>
<dbReference type="SMR" id="Q5M824"/>
<dbReference type="BioGRID" id="250090">
    <property type="interactions" value="9"/>
</dbReference>
<dbReference type="CORUM" id="Q5M824"/>
<dbReference type="FunCoup" id="Q5M824">
    <property type="interactions" value="2311"/>
</dbReference>
<dbReference type="IntAct" id="Q5M824">
    <property type="interactions" value="7"/>
</dbReference>
<dbReference type="MINT" id="Q5M824"/>
<dbReference type="STRING" id="10116.ENSRNOP00000028038"/>
<dbReference type="iPTMnet" id="Q5M824"/>
<dbReference type="jPOST" id="Q5M824"/>
<dbReference type="PaxDb" id="10116-ENSRNOP00000028038"/>
<dbReference type="PeptideAtlas" id="Q5M824"/>
<dbReference type="GeneID" id="85385"/>
<dbReference type="KEGG" id="rno:85385"/>
<dbReference type="UCSC" id="RGD:620446">
    <property type="organism name" value="rat"/>
</dbReference>
<dbReference type="AGR" id="RGD:620446"/>
<dbReference type="CTD" id="6464"/>
<dbReference type="RGD" id="620446">
    <property type="gene designation" value="Shc1"/>
</dbReference>
<dbReference type="eggNOG" id="KOG3697">
    <property type="taxonomic scope" value="Eukaryota"/>
</dbReference>
<dbReference type="InParanoid" id="Q5M824"/>
<dbReference type="PhylomeDB" id="Q5M824"/>
<dbReference type="Reactome" id="R-RNO-1250196">
    <property type="pathway name" value="SHC1 events in ERBB2 signaling"/>
</dbReference>
<dbReference type="Reactome" id="R-RNO-1250347">
    <property type="pathway name" value="SHC1 events in ERBB4 signaling"/>
</dbReference>
<dbReference type="Reactome" id="R-RNO-167044">
    <property type="pathway name" value="Signalling to RAS"/>
</dbReference>
<dbReference type="Reactome" id="R-RNO-180336">
    <property type="pathway name" value="SHC1 events in EGFR signaling"/>
</dbReference>
<dbReference type="Reactome" id="R-RNO-201556">
    <property type="pathway name" value="Signaling by ALK"/>
</dbReference>
<dbReference type="Reactome" id="R-RNO-210993">
    <property type="pathway name" value="Tie2 Signaling"/>
</dbReference>
<dbReference type="Reactome" id="R-RNO-2424491">
    <property type="pathway name" value="DAP12 signaling"/>
</dbReference>
<dbReference type="Reactome" id="R-RNO-2428933">
    <property type="pathway name" value="SHC-related events triggered by IGF1R"/>
</dbReference>
<dbReference type="Reactome" id="R-RNO-2730905">
    <property type="pathway name" value="Role of LAT2/NTAL/LAB on calcium mobilization"/>
</dbReference>
<dbReference type="Reactome" id="R-RNO-2871796">
    <property type="pathway name" value="FCERI mediated MAPK activation"/>
</dbReference>
<dbReference type="Reactome" id="R-RNO-2871809">
    <property type="pathway name" value="FCERI mediated Ca+2 mobilization"/>
</dbReference>
<dbReference type="Reactome" id="R-RNO-354192">
    <property type="pathway name" value="Integrin signaling"/>
</dbReference>
<dbReference type="Reactome" id="R-RNO-512988">
    <property type="pathway name" value="Interleukin-3, Interleukin-5 and GM-CSF signaling"/>
</dbReference>
<dbReference type="Reactome" id="R-RNO-5654688">
    <property type="pathway name" value="SHC-mediated cascade:FGFR1"/>
</dbReference>
<dbReference type="Reactome" id="R-RNO-5654699">
    <property type="pathway name" value="SHC-mediated cascade:FGFR2"/>
</dbReference>
<dbReference type="Reactome" id="R-RNO-5654704">
    <property type="pathway name" value="SHC-mediated cascade:FGFR3"/>
</dbReference>
<dbReference type="Reactome" id="R-RNO-5654719">
    <property type="pathway name" value="SHC-mediated cascade:FGFR4"/>
</dbReference>
<dbReference type="Reactome" id="R-RNO-5673001">
    <property type="pathway name" value="RAF/MAP kinase cascade"/>
</dbReference>
<dbReference type="Reactome" id="R-RNO-74749">
    <property type="pathway name" value="Signal attenuation"/>
</dbReference>
<dbReference type="Reactome" id="R-RNO-74751">
    <property type="pathway name" value="Insulin receptor signalling cascade"/>
</dbReference>
<dbReference type="Reactome" id="R-RNO-8851805">
    <property type="pathway name" value="MET activates RAS signaling"/>
</dbReference>
<dbReference type="Reactome" id="R-RNO-8853659">
    <property type="pathway name" value="RET signaling"/>
</dbReference>
<dbReference type="Reactome" id="R-RNO-8983432">
    <property type="pathway name" value="Interleukin-15 signaling"/>
</dbReference>
<dbReference type="Reactome" id="R-RNO-9009391">
    <property type="pathway name" value="Extra-nuclear estrogen signaling"/>
</dbReference>
<dbReference type="Reactome" id="R-RNO-9020558">
    <property type="pathway name" value="Interleukin-2 signaling"/>
</dbReference>
<dbReference type="Reactome" id="R-RNO-9027284">
    <property type="pathway name" value="Erythropoietin activates RAS"/>
</dbReference>
<dbReference type="Reactome" id="R-RNO-912526">
    <property type="pathway name" value="Interleukin receptor SHC signaling"/>
</dbReference>
<dbReference type="Reactome" id="R-RNO-9634597">
    <property type="pathway name" value="GPER1 signaling"/>
</dbReference>
<dbReference type="Reactome" id="R-RNO-9674555">
    <property type="pathway name" value="Signaling by CSF3 (G-CSF)"/>
</dbReference>
<dbReference type="Reactome" id="R-RNO-9842663">
    <property type="pathway name" value="Signaling by LTK"/>
</dbReference>
<dbReference type="PRO" id="PR:Q5M824"/>
<dbReference type="Proteomes" id="UP000002494">
    <property type="component" value="Unplaced"/>
</dbReference>
<dbReference type="GO" id="GO:0005829">
    <property type="term" value="C:cytosol"/>
    <property type="evidence" value="ECO:0000304"/>
    <property type="project" value="Reactome"/>
</dbReference>
<dbReference type="GO" id="GO:0010008">
    <property type="term" value="C:endosome membrane"/>
    <property type="evidence" value="ECO:0000314"/>
    <property type="project" value="RGD"/>
</dbReference>
<dbReference type="GO" id="GO:0005925">
    <property type="term" value="C:focal adhesion"/>
    <property type="evidence" value="ECO:0007669"/>
    <property type="project" value="UniProtKB-SubCell"/>
</dbReference>
<dbReference type="GO" id="GO:0005886">
    <property type="term" value="C:plasma membrane"/>
    <property type="evidence" value="ECO:0000266"/>
    <property type="project" value="RGD"/>
</dbReference>
<dbReference type="GO" id="GO:0070435">
    <property type="term" value="C:Shc-EGFR complex"/>
    <property type="evidence" value="ECO:0000314"/>
    <property type="project" value="BHF-UCL"/>
</dbReference>
<dbReference type="GO" id="GO:0046875">
    <property type="term" value="F:ephrin receptor binding"/>
    <property type="evidence" value="ECO:0000266"/>
    <property type="project" value="RGD"/>
</dbReference>
<dbReference type="GO" id="GO:0048408">
    <property type="term" value="F:epidermal growth factor binding"/>
    <property type="evidence" value="ECO:0000266"/>
    <property type="project" value="RGD"/>
</dbReference>
<dbReference type="GO" id="GO:0005154">
    <property type="term" value="F:epidermal growth factor receptor binding"/>
    <property type="evidence" value="ECO:0000353"/>
    <property type="project" value="BHF-UCL"/>
</dbReference>
<dbReference type="GO" id="GO:0005158">
    <property type="term" value="F:insulin receptor binding"/>
    <property type="evidence" value="ECO:0000266"/>
    <property type="project" value="RGD"/>
</dbReference>
<dbReference type="GO" id="GO:0005159">
    <property type="term" value="F:insulin-like growth factor receptor binding"/>
    <property type="evidence" value="ECO:0000266"/>
    <property type="project" value="RGD"/>
</dbReference>
<dbReference type="GO" id="GO:0005168">
    <property type="term" value="F:neurotrophin TRKA receptor binding"/>
    <property type="evidence" value="ECO:0000266"/>
    <property type="project" value="RGD"/>
</dbReference>
<dbReference type="GO" id="GO:0051219">
    <property type="term" value="F:phosphoprotein binding"/>
    <property type="evidence" value="ECO:0000353"/>
    <property type="project" value="RGD"/>
</dbReference>
<dbReference type="GO" id="GO:0001784">
    <property type="term" value="F:phosphotyrosine residue binding"/>
    <property type="evidence" value="ECO:0000353"/>
    <property type="project" value="RGD"/>
</dbReference>
<dbReference type="GO" id="GO:0051721">
    <property type="term" value="F:protein phosphatase 2A binding"/>
    <property type="evidence" value="ECO:0000314"/>
    <property type="project" value="RGD"/>
</dbReference>
<dbReference type="GO" id="GO:0044877">
    <property type="term" value="F:protein-containing complex binding"/>
    <property type="evidence" value="ECO:0000353"/>
    <property type="project" value="RGD"/>
</dbReference>
<dbReference type="GO" id="GO:0030971">
    <property type="term" value="F:receptor tyrosine kinase binding"/>
    <property type="evidence" value="ECO:0000353"/>
    <property type="project" value="UniProtKB"/>
</dbReference>
<dbReference type="GO" id="GO:0005068">
    <property type="term" value="F:transmembrane receptor protein tyrosine kinase adaptor activity"/>
    <property type="evidence" value="ECO:0000266"/>
    <property type="project" value="RGD"/>
</dbReference>
<dbReference type="GO" id="GO:0030036">
    <property type="term" value="P:actin cytoskeleton organization"/>
    <property type="evidence" value="ECO:0000315"/>
    <property type="project" value="RGD"/>
</dbReference>
<dbReference type="GO" id="GO:0001525">
    <property type="term" value="P:angiogenesis"/>
    <property type="evidence" value="ECO:0000266"/>
    <property type="project" value="RGD"/>
</dbReference>
<dbReference type="GO" id="GO:0031100">
    <property type="term" value="P:animal organ regeneration"/>
    <property type="evidence" value="ECO:0000270"/>
    <property type="project" value="RGD"/>
</dbReference>
<dbReference type="GO" id="GO:0098609">
    <property type="term" value="P:cell-cell adhesion"/>
    <property type="evidence" value="ECO:0000266"/>
    <property type="project" value="RGD"/>
</dbReference>
<dbReference type="GO" id="GO:0071363">
    <property type="term" value="P:cellular response to growth factor stimulus"/>
    <property type="evidence" value="ECO:0000250"/>
    <property type="project" value="UniProtKB"/>
</dbReference>
<dbReference type="GO" id="GO:0070301">
    <property type="term" value="P:cellular response to hydrogen peroxide"/>
    <property type="evidence" value="ECO:0000270"/>
    <property type="project" value="RGD"/>
</dbReference>
<dbReference type="GO" id="GO:0032869">
    <property type="term" value="P:cellular response to insulin stimulus"/>
    <property type="evidence" value="ECO:0000270"/>
    <property type="project" value="RGD"/>
</dbReference>
<dbReference type="GO" id="GO:1904628">
    <property type="term" value="P:cellular response to phorbol 13-acetate 12-myristate"/>
    <property type="evidence" value="ECO:0000270"/>
    <property type="project" value="RGD"/>
</dbReference>
<dbReference type="GO" id="GO:0097237">
    <property type="term" value="P:cellular response to toxic substance"/>
    <property type="evidence" value="ECO:0000270"/>
    <property type="project" value="RGD"/>
</dbReference>
<dbReference type="GO" id="GO:0042742">
    <property type="term" value="P:defense response to bacterium"/>
    <property type="evidence" value="ECO:0000266"/>
    <property type="project" value="RGD"/>
</dbReference>
<dbReference type="GO" id="GO:0007173">
    <property type="term" value="P:epidermal growth factor receptor signaling pathway"/>
    <property type="evidence" value="ECO:0000266"/>
    <property type="project" value="RGD"/>
</dbReference>
<dbReference type="GO" id="GO:0007507">
    <property type="term" value="P:heart development"/>
    <property type="evidence" value="ECO:0000266"/>
    <property type="project" value="RGD"/>
</dbReference>
<dbReference type="GO" id="GO:0008286">
    <property type="term" value="P:insulin receptor signaling pathway"/>
    <property type="evidence" value="ECO:0000314"/>
    <property type="project" value="BHF-UCL"/>
</dbReference>
<dbReference type="GO" id="GO:0048009">
    <property type="term" value="P:insulin-like growth factor receptor signaling pathway"/>
    <property type="evidence" value="ECO:0000266"/>
    <property type="project" value="RGD"/>
</dbReference>
<dbReference type="GO" id="GO:0035556">
    <property type="term" value="P:intracellular signal transduction"/>
    <property type="evidence" value="ECO:0007669"/>
    <property type="project" value="InterPro"/>
</dbReference>
<dbReference type="GO" id="GO:0043066">
    <property type="term" value="P:negative regulation of apoptotic process"/>
    <property type="evidence" value="ECO:0000266"/>
    <property type="project" value="RGD"/>
</dbReference>
<dbReference type="GO" id="GO:0045892">
    <property type="term" value="P:negative regulation of DNA-templated transcription"/>
    <property type="evidence" value="ECO:0000266"/>
    <property type="project" value="RGD"/>
</dbReference>
<dbReference type="GO" id="GO:0030182">
    <property type="term" value="P:neuron differentiation"/>
    <property type="evidence" value="ECO:0000315"/>
    <property type="project" value="RGD"/>
</dbReference>
<dbReference type="GO" id="GO:0031175">
    <property type="term" value="P:neuron projection development"/>
    <property type="evidence" value="ECO:0000315"/>
    <property type="project" value="RGD"/>
</dbReference>
<dbReference type="GO" id="GO:0008284">
    <property type="term" value="P:positive regulation of cell population proliferation"/>
    <property type="evidence" value="ECO:0000315"/>
    <property type="project" value="BHF-UCL"/>
</dbReference>
<dbReference type="GO" id="GO:0045893">
    <property type="term" value="P:positive regulation of DNA-templated transcription"/>
    <property type="evidence" value="ECO:0000266"/>
    <property type="project" value="RGD"/>
</dbReference>
<dbReference type="GO" id="GO:0070374">
    <property type="term" value="P:positive regulation of ERK1 and ERK2 cascade"/>
    <property type="evidence" value="ECO:0000266"/>
    <property type="project" value="RGD"/>
</dbReference>
<dbReference type="GO" id="GO:0043410">
    <property type="term" value="P:positive regulation of MAPK cascade"/>
    <property type="evidence" value="ECO:0000315"/>
    <property type="project" value="RGD"/>
</dbReference>
<dbReference type="GO" id="GO:0048661">
    <property type="term" value="P:positive regulation of smooth muscle cell proliferation"/>
    <property type="evidence" value="ECO:0000315"/>
    <property type="project" value="RGD"/>
</dbReference>
<dbReference type="GO" id="GO:0045907">
    <property type="term" value="P:positive regulation of vasoconstriction"/>
    <property type="evidence" value="ECO:0000315"/>
    <property type="project" value="RGD"/>
</dbReference>
<dbReference type="GO" id="GO:0042127">
    <property type="term" value="P:regulation of cell population proliferation"/>
    <property type="evidence" value="ECO:0000266"/>
    <property type="project" value="RGD"/>
</dbReference>
<dbReference type="GO" id="GO:0006940">
    <property type="term" value="P:regulation of smooth muscle contraction"/>
    <property type="evidence" value="ECO:0000315"/>
    <property type="project" value="RGD"/>
</dbReference>
<dbReference type="GO" id="GO:1990839">
    <property type="term" value="P:response to endothelin"/>
    <property type="evidence" value="ECO:0000315"/>
    <property type="project" value="RGD"/>
</dbReference>
<dbReference type="GO" id="GO:0051384">
    <property type="term" value="P:response to glucocorticoid"/>
    <property type="evidence" value="ECO:0000270"/>
    <property type="project" value="RGD"/>
</dbReference>
<dbReference type="GO" id="GO:0001666">
    <property type="term" value="P:response to hypoxia"/>
    <property type="evidence" value="ECO:0000270"/>
    <property type="project" value="RGD"/>
</dbReference>
<dbReference type="GO" id="GO:0032868">
    <property type="term" value="P:response to insulin"/>
    <property type="evidence" value="ECO:0000270"/>
    <property type="project" value="RGD"/>
</dbReference>
<dbReference type="GO" id="GO:0035094">
    <property type="term" value="P:response to nicotine"/>
    <property type="evidence" value="ECO:0000270"/>
    <property type="project" value="RGD"/>
</dbReference>
<dbReference type="CDD" id="cd01209">
    <property type="entry name" value="PTB_Shc"/>
    <property type="match status" value="1"/>
</dbReference>
<dbReference type="CDD" id="cd09925">
    <property type="entry name" value="SH2_SHC"/>
    <property type="match status" value="1"/>
</dbReference>
<dbReference type="FunFam" id="2.30.29.30:FF:000036">
    <property type="entry name" value="SHC-transforming protein 1 isoform 3"/>
    <property type="match status" value="1"/>
</dbReference>
<dbReference type="FunFam" id="3.30.505.10:FF:000005">
    <property type="entry name" value="SHC-transforming protein 1 isoform 3"/>
    <property type="match status" value="1"/>
</dbReference>
<dbReference type="Gene3D" id="2.30.29.30">
    <property type="entry name" value="Pleckstrin-homology domain (PH domain)/Phosphotyrosine-binding domain (PTB)"/>
    <property type="match status" value="1"/>
</dbReference>
<dbReference type="Gene3D" id="3.30.505.10">
    <property type="entry name" value="SH2 domain"/>
    <property type="match status" value="1"/>
</dbReference>
<dbReference type="InterPro" id="IPR051235">
    <property type="entry name" value="CEP152/SHC-Transforming"/>
</dbReference>
<dbReference type="InterPro" id="IPR011993">
    <property type="entry name" value="PH-like_dom_sf"/>
</dbReference>
<dbReference type="InterPro" id="IPR006019">
    <property type="entry name" value="PID_Shc-like"/>
</dbReference>
<dbReference type="InterPro" id="IPR006020">
    <property type="entry name" value="PTB/PI_dom"/>
</dbReference>
<dbReference type="InterPro" id="IPR000980">
    <property type="entry name" value="SH2"/>
</dbReference>
<dbReference type="InterPro" id="IPR036860">
    <property type="entry name" value="SH2_dom_sf"/>
</dbReference>
<dbReference type="InterPro" id="IPR035676">
    <property type="entry name" value="SHC_SH2"/>
</dbReference>
<dbReference type="PANTHER" id="PTHR10337">
    <property type="entry name" value="SHC TRANSFORMING PROTEIN"/>
    <property type="match status" value="1"/>
</dbReference>
<dbReference type="PANTHER" id="PTHR10337:SF2">
    <property type="entry name" value="SHC-TRANSFORMING PROTEIN 1"/>
    <property type="match status" value="1"/>
</dbReference>
<dbReference type="Pfam" id="PF00640">
    <property type="entry name" value="PID"/>
    <property type="match status" value="1"/>
</dbReference>
<dbReference type="Pfam" id="PF00017">
    <property type="entry name" value="SH2"/>
    <property type="match status" value="1"/>
</dbReference>
<dbReference type="PRINTS" id="PR00401">
    <property type="entry name" value="SH2DOMAIN"/>
</dbReference>
<dbReference type="PRINTS" id="PR00629">
    <property type="entry name" value="SHCPIDOMAIN"/>
</dbReference>
<dbReference type="SMART" id="SM00462">
    <property type="entry name" value="PTB"/>
    <property type="match status" value="1"/>
</dbReference>
<dbReference type="SMART" id="SM00252">
    <property type="entry name" value="SH2"/>
    <property type="match status" value="1"/>
</dbReference>
<dbReference type="SUPFAM" id="SSF50729">
    <property type="entry name" value="PH domain-like"/>
    <property type="match status" value="1"/>
</dbReference>
<dbReference type="SUPFAM" id="SSF55550">
    <property type="entry name" value="SH2 domain"/>
    <property type="match status" value="1"/>
</dbReference>
<dbReference type="PROSITE" id="PS01179">
    <property type="entry name" value="PID"/>
    <property type="match status" value="1"/>
</dbReference>
<dbReference type="PROSITE" id="PS50001">
    <property type="entry name" value="SH2"/>
    <property type="match status" value="1"/>
</dbReference>
<sequence>MNKLSGGGGRRTRVEGGQLGGEEWTRHGSFVNKPTRGWLHPNDKVMGPGVSYLVRYMGCVEVLQSMRALDFNTRTQVTREAISLVCEAVPGAKGAMRRRKPCSRPLSSILGRSNLKFAGMPITLTVSTSSLNLMAADCKQIIANHHMQSISFASGGDPDTAEYVAYVAKDPVNQRACHILECPEGLAQDVISTIGQAFELRFKQYLRNPPKLVTPHDRMAGFDGSAWDEEEEELPDHQYYNDFPGKEPPLGGVVDMRLREGAARPTLPSTQMPSHLGATLPIGQHVTGDHEVRKQMLPPPPCPGRELFDDPSYVNIQNLDKARQAGGGAGPPNPSVNGSAPRDLFDMKPFEDALRVPPAPQSMSMAEQLQGESWFHGKLSRREAEALLQLNGDFLVRESTTTPGQYVLTGLQSGQPKHLLLVDPEGVVRTKDHRFESVSHLISYHMDNHLPIISAGSELCLQQPVDRKV</sequence>
<keyword id="KW-0007">Acetylation</keyword>
<keyword id="KW-0037">Angiogenesis</keyword>
<keyword id="KW-0965">Cell junction</keyword>
<keyword id="KW-0963">Cytoplasm</keyword>
<keyword id="KW-0341">Growth regulation</keyword>
<keyword id="KW-0597">Phosphoprotein</keyword>
<keyword id="KW-1185">Reference proteome</keyword>
<keyword id="KW-0727">SH2 domain</keyword>
<evidence type="ECO:0000250" key="1"/>
<evidence type="ECO:0000250" key="2">
    <source>
        <dbReference type="UniProtKB" id="P29353"/>
    </source>
</evidence>
<evidence type="ECO:0000250" key="3">
    <source>
        <dbReference type="UniProtKB" id="P98083"/>
    </source>
</evidence>
<evidence type="ECO:0000255" key="4">
    <source>
        <dbReference type="PROSITE-ProRule" id="PRU00148"/>
    </source>
</evidence>
<evidence type="ECO:0000255" key="5">
    <source>
        <dbReference type="PROSITE-ProRule" id="PRU00191"/>
    </source>
</evidence>
<evidence type="ECO:0000256" key="6">
    <source>
        <dbReference type="SAM" id="MobiDB-lite"/>
    </source>
</evidence>
<evidence type="ECO:0000269" key="7">
    <source>
    </source>
</evidence>
<evidence type="ECO:0000269" key="8">
    <source>
    </source>
</evidence>
<evidence type="ECO:0000269" key="9">
    <source>
    </source>
</evidence>
<evidence type="ECO:0000269" key="10">
    <source>
    </source>
</evidence>
<evidence type="ECO:0000269" key="11">
    <source>
    </source>
</evidence>
<name>SHC1_RAT</name>
<reference key="1">
    <citation type="journal article" date="2004" name="Genome Res.">
        <title>The status, quality, and expansion of the NIH full-length cDNA project: the Mammalian Gene Collection (MGC).</title>
        <authorList>
            <consortium name="The MGC Project Team"/>
        </authorList>
    </citation>
    <scope>NUCLEOTIDE SEQUENCE [LARGE SCALE MRNA]</scope>
    <source>
        <tissue>Liver</tissue>
    </source>
</reference>
<reference key="2">
    <citation type="journal article" date="1995" name="Nature">
        <title>Protein tyrosine kinase PYK2 involved in Ca(2+)-induced regulation of ion channel and MAP kinase functions.</title>
        <authorList>
            <person name="Lev S."/>
            <person name="Moreno H."/>
            <person name="Martinez R."/>
            <person name="Canoll P."/>
            <person name="Peles E."/>
            <person name="Musacchio J.M."/>
            <person name="Plowman G.D."/>
            <person name="Rudy B."/>
            <person name="Schlessinger J."/>
        </authorList>
    </citation>
    <scope>PHOSPHORYLATION</scope>
    <source>
        <tissue>Brain</tissue>
    </source>
</reference>
<reference key="3">
    <citation type="journal article" date="1995" name="Oncogene">
        <title>Mutation at tyrosine residue 1337 abrogates ligand-dependent transforming capacity of the FLT4 receptor.</title>
        <authorList>
            <person name="Fournier E."/>
            <person name="Dubreuil P."/>
            <person name="Birnbaum D."/>
            <person name="Borg J.P."/>
        </authorList>
    </citation>
    <scope>PHOSPHORYLATION</scope>
    <scope>INTERACTION WITH FLT4</scope>
</reference>
<reference key="4">
    <citation type="journal article" date="1998" name="Oncogene">
        <title>Activation loop tyrosines contribute varying roles to TrkB autophosphorylation and signal transduction.</title>
        <authorList>
            <person name="McCarty J.H."/>
            <person name="Feinstein S.C."/>
        </authorList>
    </citation>
    <scope>INTERACTION WITH NTRK2</scope>
</reference>
<reference key="5">
    <citation type="journal article" date="2002" name="J. Biol. Chem.">
        <title>Shc and CEACAM1 interact to regulate the mitogenic action of insulin.</title>
        <authorList>
            <person name="Poy M.N."/>
            <person name="Ruch R.J."/>
            <person name="Fernstrom M.A."/>
            <person name="Okabayashi Y."/>
            <person name="Najjar S.M."/>
        </authorList>
    </citation>
    <scope>INTERACTION WITH CEACAM1</scope>
</reference>
<reference key="6">
    <citation type="journal article" date="2005" name="J. Biol. Chem.">
        <title>Tyrosine 740 phosphorylation of discoidin domain receptor 2 by Src stimulates intramolecular autophosphorylation and Shc signaling complex formation.</title>
        <authorList>
            <person name="Yang K."/>
            <person name="Kim J.H."/>
            <person name="Kim H.J."/>
            <person name="Park I.S."/>
            <person name="Kim I.Y."/>
            <person name="Yang B.S."/>
        </authorList>
    </citation>
    <scope>INTERACTION WITH DDR2</scope>
</reference>
<proteinExistence type="evidence at protein level"/>